<sequence>MVKRAVVLISGGLDSTTCLAMAKAKGFEPVCLAVAYGQRHAVELEQARKVAAAMGVTDFRVVSIDLRQVGGSALTADIEVPKDRPSDEMSHGIPVTYVPARNALFLSLALGLAEVVGSTDIYIGVNAVDYSGYPDCRPEFIRSFESMANLATKAGVEGAHFTVHAPLSGLTKADIIREGVKLGVDYGLTHSCYDPDAQGRACGRCDSCVLRKKGFEEAGVPDPTRYTESA</sequence>
<evidence type="ECO:0000255" key="1">
    <source>
        <dbReference type="HAMAP-Rule" id="MF_01633"/>
    </source>
</evidence>
<dbReference type="EC" id="6.3.4.20" evidence="1"/>
<dbReference type="EMBL" id="CP000113">
    <property type="protein sequence ID" value="ABF87954.1"/>
    <property type="molecule type" value="Genomic_DNA"/>
</dbReference>
<dbReference type="RefSeq" id="WP_011556349.1">
    <property type="nucleotide sequence ID" value="NC_008095.1"/>
</dbReference>
<dbReference type="SMR" id="Q1CYI2"/>
<dbReference type="STRING" id="246197.MXAN_6417"/>
<dbReference type="EnsemblBacteria" id="ABF87954">
    <property type="protein sequence ID" value="ABF87954"/>
    <property type="gene ID" value="MXAN_6417"/>
</dbReference>
<dbReference type="GeneID" id="41363627"/>
<dbReference type="KEGG" id="mxa:MXAN_6417"/>
<dbReference type="eggNOG" id="COG0603">
    <property type="taxonomic scope" value="Bacteria"/>
</dbReference>
<dbReference type="HOGENOM" id="CLU_081854_1_1_7"/>
<dbReference type="OrthoDB" id="9789567at2"/>
<dbReference type="UniPathway" id="UPA00391"/>
<dbReference type="Proteomes" id="UP000002402">
    <property type="component" value="Chromosome"/>
</dbReference>
<dbReference type="GO" id="GO:0005524">
    <property type="term" value="F:ATP binding"/>
    <property type="evidence" value="ECO:0007669"/>
    <property type="project" value="UniProtKB-UniRule"/>
</dbReference>
<dbReference type="GO" id="GO:0016879">
    <property type="term" value="F:ligase activity, forming carbon-nitrogen bonds"/>
    <property type="evidence" value="ECO:0007669"/>
    <property type="project" value="UniProtKB-UniRule"/>
</dbReference>
<dbReference type="GO" id="GO:0008270">
    <property type="term" value="F:zinc ion binding"/>
    <property type="evidence" value="ECO:0007669"/>
    <property type="project" value="UniProtKB-UniRule"/>
</dbReference>
<dbReference type="GO" id="GO:0008616">
    <property type="term" value="P:queuosine biosynthetic process"/>
    <property type="evidence" value="ECO:0007669"/>
    <property type="project" value="UniProtKB-UniRule"/>
</dbReference>
<dbReference type="CDD" id="cd01995">
    <property type="entry name" value="QueC-like"/>
    <property type="match status" value="1"/>
</dbReference>
<dbReference type="Gene3D" id="3.40.50.620">
    <property type="entry name" value="HUPs"/>
    <property type="match status" value="1"/>
</dbReference>
<dbReference type="HAMAP" id="MF_01633">
    <property type="entry name" value="QueC"/>
    <property type="match status" value="1"/>
</dbReference>
<dbReference type="InterPro" id="IPR018317">
    <property type="entry name" value="QueC"/>
</dbReference>
<dbReference type="InterPro" id="IPR014729">
    <property type="entry name" value="Rossmann-like_a/b/a_fold"/>
</dbReference>
<dbReference type="NCBIfam" id="TIGR00364">
    <property type="entry name" value="7-cyano-7-deazaguanine synthase QueC"/>
    <property type="match status" value="1"/>
</dbReference>
<dbReference type="PANTHER" id="PTHR42914">
    <property type="entry name" value="7-CYANO-7-DEAZAGUANINE SYNTHASE"/>
    <property type="match status" value="1"/>
</dbReference>
<dbReference type="PANTHER" id="PTHR42914:SF1">
    <property type="entry name" value="7-CYANO-7-DEAZAGUANINE SYNTHASE"/>
    <property type="match status" value="1"/>
</dbReference>
<dbReference type="Pfam" id="PF06508">
    <property type="entry name" value="QueC"/>
    <property type="match status" value="1"/>
</dbReference>
<dbReference type="PIRSF" id="PIRSF006293">
    <property type="entry name" value="ExsB"/>
    <property type="match status" value="1"/>
</dbReference>
<dbReference type="SUPFAM" id="SSF52402">
    <property type="entry name" value="Adenine nucleotide alpha hydrolases-like"/>
    <property type="match status" value="1"/>
</dbReference>
<protein>
    <recommendedName>
        <fullName evidence="1">7-cyano-7-deazaguanine synthase</fullName>
        <ecNumber evidence="1">6.3.4.20</ecNumber>
    </recommendedName>
    <alternativeName>
        <fullName evidence="1">7-cyano-7-carbaguanine synthase</fullName>
    </alternativeName>
    <alternativeName>
        <fullName evidence="1">PreQ(0) synthase</fullName>
    </alternativeName>
    <alternativeName>
        <fullName evidence="1">Queuosine biosynthesis protein QueC</fullName>
    </alternativeName>
</protein>
<reference key="1">
    <citation type="journal article" date="2006" name="Proc. Natl. Acad. Sci. U.S.A.">
        <title>Evolution of sensory complexity recorded in a myxobacterial genome.</title>
        <authorList>
            <person name="Goldman B.S."/>
            <person name="Nierman W.C."/>
            <person name="Kaiser D."/>
            <person name="Slater S.C."/>
            <person name="Durkin A.S."/>
            <person name="Eisen J.A."/>
            <person name="Ronning C.M."/>
            <person name="Barbazuk W.B."/>
            <person name="Blanchard M."/>
            <person name="Field C."/>
            <person name="Halling C."/>
            <person name="Hinkle G."/>
            <person name="Iartchuk O."/>
            <person name="Kim H.S."/>
            <person name="Mackenzie C."/>
            <person name="Madupu R."/>
            <person name="Miller N."/>
            <person name="Shvartsbeyn A."/>
            <person name="Sullivan S.A."/>
            <person name="Vaudin M."/>
            <person name="Wiegand R."/>
            <person name="Kaplan H.B."/>
        </authorList>
    </citation>
    <scope>NUCLEOTIDE SEQUENCE [LARGE SCALE GENOMIC DNA]</scope>
    <source>
        <strain>DK1622</strain>
    </source>
</reference>
<feature type="chain" id="PRO_0000255924" description="7-cyano-7-deazaguanine synthase">
    <location>
        <begin position="1"/>
        <end position="230"/>
    </location>
</feature>
<feature type="binding site" evidence="1">
    <location>
        <begin position="9"/>
        <end position="19"/>
    </location>
    <ligand>
        <name>ATP</name>
        <dbReference type="ChEBI" id="CHEBI:30616"/>
    </ligand>
</feature>
<feature type="binding site" evidence="1">
    <location>
        <position position="192"/>
    </location>
    <ligand>
        <name>Zn(2+)</name>
        <dbReference type="ChEBI" id="CHEBI:29105"/>
    </ligand>
</feature>
<feature type="binding site" evidence="1">
    <location>
        <position position="202"/>
    </location>
    <ligand>
        <name>Zn(2+)</name>
        <dbReference type="ChEBI" id="CHEBI:29105"/>
    </ligand>
</feature>
<feature type="binding site" evidence="1">
    <location>
        <position position="205"/>
    </location>
    <ligand>
        <name>Zn(2+)</name>
        <dbReference type="ChEBI" id="CHEBI:29105"/>
    </ligand>
</feature>
<feature type="binding site" evidence="1">
    <location>
        <position position="208"/>
    </location>
    <ligand>
        <name>Zn(2+)</name>
        <dbReference type="ChEBI" id="CHEBI:29105"/>
    </ligand>
</feature>
<accession>Q1CYI2</accession>
<comment type="function">
    <text evidence="1">Catalyzes the ATP-dependent conversion of 7-carboxy-7-deazaguanine (CDG) to 7-cyano-7-deazaguanine (preQ(0)).</text>
</comment>
<comment type="catalytic activity">
    <reaction evidence="1">
        <text>7-carboxy-7-deazaguanine + NH4(+) + ATP = 7-cyano-7-deazaguanine + ADP + phosphate + H2O + H(+)</text>
        <dbReference type="Rhea" id="RHEA:27982"/>
        <dbReference type="ChEBI" id="CHEBI:15377"/>
        <dbReference type="ChEBI" id="CHEBI:15378"/>
        <dbReference type="ChEBI" id="CHEBI:28938"/>
        <dbReference type="ChEBI" id="CHEBI:30616"/>
        <dbReference type="ChEBI" id="CHEBI:43474"/>
        <dbReference type="ChEBI" id="CHEBI:45075"/>
        <dbReference type="ChEBI" id="CHEBI:61036"/>
        <dbReference type="ChEBI" id="CHEBI:456216"/>
        <dbReference type="EC" id="6.3.4.20"/>
    </reaction>
</comment>
<comment type="cofactor">
    <cofactor evidence="1">
        <name>Zn(2+)</name>
        <dbReference type="ChEBI" id="CHEBI:29105"/>
    </cofactor>
    <text evidence="1">Binds 1 zinc ion per subunit.</text>
</comment>
<comment type="pathway">
    <text evidence="1">Purine metabolism; 7-cyano-7-deazaguanine biosynthesis.</text>
</comment>
<comment type="similarity">
    <text evidence="1">Belongs to the QueC family.</text>
</comment>
<organism>
    <name type="scientific">Myxococcus xanthus (strain DK1622)</name>
    <dbReference type="NCBI Taxonomy" id="246197"/>
    <lineage>
        <taxon>Bacteria</taxon>
        <taxon>Pseudomonadati</taxon>
        <taxon>Myxococcota</taxon>
        <taxon>Myxococcia</taxon>
        <taxon>Myxococcales</taxon>
        <taxon>Cystobacterineae</taxon>
        <taxon>Myxococcaceae</taxon>
        <taxon>Myxococcus</taxon>
    </lineage>
</organism>
<gene>
    <name evidence="1" type="primary">queC</name>
    <name type="ordered locus">MXAN_6417</name>
</gene>
<name>QUEC_MYXXD</name>
<proteinExistence type="inferred from homology"/>
<keyword id="KW-0067">ATP-binding</keyword>
<keyword id="KW-0436">Ligase</keyword>
<keyword id="KW-0479">Metal-binding</keyword>
<keyword id="KW-0547">Nucleotide-binding</keyword>
<keyword id="KW-0671">Queuosine biosynthesis</keyword>
<keyword id="KW-1185">Reference proteome</keyword>
<keyword id="KW-0862">Zinc</keyword>